<name>ARGB_RHOJR</name>
<feature type="chain" id="PRO_0000264745" description="Acetylglutamate kinase">
    <location>
        <begin position="1"/>
        <end position="308"/>
    </location>
</feature>
<feature type="binding site" evidence="1">
    <location>
        <begin position="73"/>
        <end position="74"/>
    </location>
    <ligand>
        <name>substrate</name>
    </ligand>
</feature>
<feature type="binding site" evidence="1">
    <location>
        <position position="95"/>
    </location>
    <ligand>
        <name>substrate</name>
    </ligand>
</feature>
<feature type="binding site" evidence="1">
    <location>
        <position position="194"/>
    </location>
    <ligand>
        <name>substrate</name>
    </ligand>
</feature>
<feature type="site" description="Transition state stabilizer" evidence="1">
    <location>
        <position position="38"/>
    </location>
</feature>
<feature type="site" description="Transition state stabilizer" evidence="1">
    <location>
        <position position="255"/>
    </location>
</feature>
<gene>
    <name evidence="1" type="primary">argB</name>
    <name type="ordered locus">RHA1_ro00954</name>
</gene>
<accession>Q0SI54</accession>
<organism>
    <name type="scientific">Rhodococcus jostii (strain RHA1)</name>
    <dbReference type="NCBI Taxonomy" id="101510"/>
    <lineage>
        <taxon>Bacteria</taxon>
        <taxon>Bacillati</taxon>
        <taxon>Actinomycetota</taxon>
        <taxon>Actinomycetes</taxon>
        <taxon>Mycobacteriales</taxon>
        <taxon>Nocardiaceae</taxon>
        <taxon>Rhodococcus</taxon>
    </lineage>
</organism>
<comment type="function">
    <text evidence="1">Catalyzes the ATP-dependent phosphorylation of N-acetyl-L-glutamate.</text>
</comment>
<comment type="catalytic activity">
    <reaction evidence="1">
        <text>N-acetyl-L-glutamate + ATP = N-acetyl-L-glutamyl 5-phosphate + ADP</text>
        <dbReference type="Rhea" id="RHEA:14629"/>
        <dbReference type="ChEBI" id="CHEBI:30616"/>
        <dbReference type="ChEBI" id="CHEBI:44337"/>
        <dbReference type="ChEBI" id="CHEBI:57936"/>
        <dbReference type="ChEBI" id="CHEBI:456216"/>
        <dbReference type="EC" id="2.7.2.8"/>
    </reaction>
</comment>
<comment type="pathway">
    <text evidence="1">Amino-acid biosynthesis; L-arginine biosynthesis; N(2)-acetyl-L-ornithine from L-glutamate: step 2/4.</text>
</comment>
<comment type="subcellular location">
    <subcellularLocation>
        <location evidence="1">Cytoplasm</location>
    </subcellularLocation>
</comment>
<comment type="similarity">
    <text evidence="1">Belongs to the acetylglutamate kinase family. ArgB subfamily.</text>
</comment>
<protein>
    <recommendedName>
        <fullName evidence="1">Acetylglutamate kinase</fullName>
        <ecNumber evidence="1">2.7.2.8</ecNumber>
    </recommendedName>
    <alternativeName>
        <fullName evidence="1">N-acetyl-L-glutamate 5-phosphotransferase</fullName>
    </alternativeName>
    <alternativeName>
        <fullName evidence="1">NAG kinase</fullName>
        <shortName evidence="1">NAGK</shortName>
    </alternativeName>
</protein>
<proteinExistence type="inferred from homology"/>
<keyword id="KW-0028">Amino-acid biosynthesis</keyword>
<keyword id="KW-0055">Arginine biosynthesis</keyword>
<keyword id="KW-0067">ATP-binding</keyword>
<keyword id="KW-0963">Cytoplasm</keyword>
<keyword id="KW-0418">Kinase</keyword>
<keyword id="KW-0547">Nucleotide-binding</keyword>
<keyword id="KW-0808">Transferase</keyword>
<evidence type="ECO:0000255" key="1">
    <source>
        <dbReference type="HAMAP-Rule" id="MF_00082"/>
    </source>
</evidence>
<dbReference type="EC" id="2.7.2.8" evidence="1"/>
<dbReference type="EMBL" id="CP000431">
    <property type="protein sequence ID" value="ABG92782.1"/>
    <property type="molecule type" value="Genomic_DNA"/>
</dbReference>
<dbReference type="RefSeq" id="WP_009473618.1">
    <property type="nucleotide sequence ID" value="NC_008268.1"/>
</dbReference>
<dbReference type="SMR" id="Q0SI54"/>
<dbReference type="KEGG" id="rha:RHA1_ro00954"/>
<dbReference type="eggNOG" id="COG0548">
    <property type="taxonomic scope" value="Bacteria"/>
</dbReference>
<dbReference type="HOGENOM" id="CLU_053680_0_1_11"/>
<dbReference type="OrthoDB" id="9803155at2"/>
<dbReference type="UniPathway" id="UPA00068">
    <property type="reaction ID" value="UER00107"/>
</dbReference>
<dbReference type="Proteomes" id="UP000008710">
    <property type="component" value="Chromosome"/>
</dbReference>
<dbReference type="GO" id="GO:0005737">
    <property type="term" value="C:cytoplasm"/>
    <property type="evidence" value="ECO:0007669"/>
    <property type="project" value="UniProtKB-SubCell"/>
</dbReference>
<dbReference type="GO" id="GO:0003991">
    <property type="term" value="F:acetylglutamate kinase activity"/>
    <property type="evidence" value="ECO:0007669"/>
    <property type="project" value="UniProtKB-UniRule"/>
</dbReference>
<dbReference type="GO" id="GO:0005524">
    <property type="term" value="F:ATP binding"/>
    <property type="evidence" value="ECO:0007669"/>
    <property type="project" value="UniProtKB-UniRule"/>
</dbReference>
<dbReference type="GO" id="GO:0042450">
    <property type="term" value="P:arginine biosynthetic process via ornithine"/>
    <property type="evidence" value="ECO:0007669"/>
    <property type="project" value="UniProtKB-UniRule"/>
</dbReference>
<dbReference type="GO" id="GO:0006526">
    <property type="term" value="P:L-arginine biosynthetic process"/>
    <property type="evidence" value="ECO:0007669"/>
    <property type="project" value="UniProtKB-UniPathway"/>
</dbReference>
<dbReference type="CDD" id="cd04250">
    <property type="entry name" value="AAK_NAGK-C"/>
    <property type="match status" value="1"/>
</dbReference>
<dbReference type="FunFam" id="3.40.1160.10:FF:000004">
    <property type="entry name" value="Acetylglutamate kinase"/>
    <property type="match status" value="1"/>
</dbReference>
<dbReference type="Gene3D" id="3.40.1160.10">
    <property type="entry name" value="Acetylglutamate kinase-like"/>
    <property type="match status" value="1"/>
</dbReference>
<dbReference type="HAMAP" id="MF_00082">
    <property type="entry name" value="ArgB"/>
    <property type="match status" value="1"/>
</dbReference>
<dbReference type="InterPro" id="IPR036393">
    <property type="entry name" value="AceGlu_kinase-like_sf"/>
</dbReference>
<dbReference type="InterPro" id="IPR004662">
    <property type="entry name" value="AcgluKinase_fam"/>
</dbReference>
<dbReference type="InterPro" id="IPR037528">
    <property type="entry name" value="ArgB"/>
</dbReference>
<dbReference type="InterPro" id="IPR001048">
    <property type="entry name" value="Asp/Glu/Uridylate_kinase"/>
</dbReference>
<dbReference type="InterPro" id="IPR001057">
    <property type="entry name" value="Glu/AcGlu_kinase"/>
</dbReference>
<dbReference type="InterPro" id="IPR041727">
    <property type="entry name" value="NAGK-C"/>
</dbReference>
<dbReference type="NCBIfam" id="TIGR00761">
    <property type="entry name" value="argB"/>
    <property type="match status" value="1"/>
</dbReference>
<dbReference type="PANTHER" id="PTHR23342">
    <property type="entry name" value="N-ACETYLGLUTAMATE SYNTHASE"/>
    <property type="match status" value="1"/>
</dbReference>
<dbReference type="PANTHER" id="PTHR23342:SF0">
    <property type="entry name" value="N-ACETYLGLUTAMATE SYNTHASE, MITOCHONDRIAL"/>
    <property type="match status" value="1"/>
</dbReference>
<dbReference type="Pfam" id="PF00696">
    <property type="entry name" value="AA_kinase"/>
    <property type="match status" value="1"/>
</dbReference>
<dbReference type="PIRSF" id="PIRSF000728">
    <property type="entry name" value="NAGK"/>
    <property type="match status" value="1"/>
</dbReference>
<dbReference type="PRINTS" id="PR00474">
    <property type="entry name" value="GLU5KINASE"/>
</dbReference>
<dbReference type="SUPFAM" id="SSF53633">
    <property type="entry name" value="Carbamate kinase-like"/>
    <property type="match status" value="1"/>
</dbReference>
<reference key="1">
    <citation type="journal article" date="2006" name="Proc. Natl. Acad. Sci. U.S.A.">
        <title>The complete genome of Rhodococcus sp. RHA1 provides insights into a catabolic powerhouse.</title>
        <authorList>
            <person name="McLeod M.P."/>
            <person name="Warren R.L."/>
            <person name="Hsiao W.W.L."/>
            <person name="Araki N."/>
            <person name="Myhre M."/>
            <person name="Fernandes C."/>
            <person name="Miyazawa D."/>
            <person name="Wong W."/>
            <person name="Lillquist A.L."/>
            <person name="Wang D."/>
            <person name="Dosanjh M."/>
            <person name="Hara H."/>
            <person name="Petrescu A."/>
            <person name="Morin R.D."/>
            <person name="Yang G."/>
            <person name="Stott J.M."/>
            <person name="Schein J.E."/>
            <person name="Shin H."/>
            <person name="Smailus D."/>
            <person name="Siddiqui A.S."/>
            <person name="Marra M.A."/>
            <person name="Jones S.J.M."/>
            <person name="Holt R."/>
            <person name="Brinkman F.S.L."/>
            <person name="Miyauchi K."/>
            <person name="Fukuda M."/>
            <person name="Davies J.E."/>
            <person name="Mohn W.W."/>
            <person name="Eltis L.D."/>
        </authorList>
    </citation>
    <scope>NUCLEOTIDE SEQUENCE [LARGE SCALE GENOMIC DNA]</scope>
    <source>
        <strain>RHA1</strain>
    </source>
</reference>
<sequence length="308" mass="32101">MTAISEALSGITDHQKAHVLAEALPWLQQFRDKVVVVKYGGNAMVDDALKTAFAADMAFLRTVGIQPVVVHGGGPQINAMLGKLGMTGEFKGGFRVTTPEVMDVVRMVLFGQVGRELVGLINAHGPYAVGISGEDAHLFTATKRTVMVEGKPTDIGLVGDVTTVNPEAVLDLIRAGRIPVVSTIAPDSDGVVHNINADTAAAALAEAIGAEKLVVLTDVEGLYTNWPDRDSLATEIDVDALAQLLPSLDAGMVPKMEACLRAVRGGVPTAHVIDGRVAHSVLLELFTGEGIGTMVTPGPTSPTEGVAS</sequence>